<comment type="function">
    <text evidence="1">Specifically methylates the N4 position of cytidine in position 1402 (C1402) of 16S rRNA.</text>
</comment>
<comment type="catalytic activity">
    <reaction evidence="1">
        <text>cytidine(1402) in 16S rRNA + S-adenosyl-L-methionine = N(4)-methylcytidine(1402) in 16S rRNA + S-adenosyl-L-homocysteine + H(+)</text>
        <dbReference type="Rhea" id="RHEA:42928"/>
        <dbReference type="Rhea" id="RHEA-COMP:10286"/>
        <dbReference type="Rhea" id="RHEA-COMP:10287"/>
        <dbReference type="ChEBI" id="CHEBI:15378"/>
        <dbReference type="ChEBI" id="CHEBI:57856"/>
        <dbReference type="ChEBI" id="CHEBI:59789"/>
        <dbReference type="ChEBI" id="CHEBI:74506"/>
        <dbReference type="ChEBI" id="CHEBI:82748"/>
        <dbReference type="EC" id="2.1.1.199"/>
    </reaction>
</comment>
<comment type="subcellular location">
    <subcellularLocation>
        <location evidence="1">Cytoplasm</location>
    </subcellularLocation>
</comment>
<comment type="similarity">
    <text evidence="1">Belongs to the methyltransferase superfamily. RsmH family.</text>
</comment>
<name>RSMH_SYNAS</name>
<sequence>MPEGKYSYHEPVLLEEAIASLNCRGGGIYVDGTVGGGGHAALILERSAPDGFLLGMDVDGDALQAAEKRLMPFGRRKTLVKANYADMRKVLADLKILQVDGILLDLGVSSHQLDAAERGFSLLKDAPLDMRMDSEAGRSAYDVVNTCSERELKDIIRKYGEEIMAGRIARAIAEKRKDTPIKSTTQLAAIVAGALPGGFRHKKIHPATRTFQALRIYINNELSNLHRAIFDSTDCLKPGGRFSIISFHSLEDSLVKNGFRSLEKGCICPADMPVCACGQSPRLKVITRKPISPCRDEVEANPRSRSARLRTAERI</sequence>
<gene>
    <name evidence="1" type="primary">rsmH</name>
    <name type="synonym">mraW</name>
    <name type="ordered locus">SYNAS_06720</name>
    <name type="ORF">SYN_01737</name>
</gene>
<feature type="chain" id="PRO_0000387185" description="Ribosomal RNA small subunit methyltransferase H">
    <location>
        <begin position="1"/>
        <end position="315"/>
    </location>
</feature>
<feature type="binding site" evidence="1">
    <location>
        <begin position="37"/>
        <end position="39"/>
    </location>
    <ligand>
        <name>S-adenosyl-L-methionine</name>
        <dbReference type="ChEBI" id="CHEBI:59789"/>
    </ligand>
</feature>
<feature type="binding site" evidence="1">
    <location>
        <position position="57"/>
    </location>
    <ligand>
        <name>S-adenosyl-L-methionine</name>
        <dbReference type="ChEBI" id="CHEBI:59789"/>
    </ligand>
</feature>
<feature type="binding site" evidence="1">
    <location>
        <position position="91"/>
    </location>
    <ligand>
        <name>S-adenosyl-L-methionine</name>
        <dbReference type="ChEBI" id="CHEBI:59789"/>
    </ligand>
</feature>
<feature type="binding site" evidence="1">
    <location>
        <position position="105"/>
    </location>
    <ligand>
        <name>S-adenosyl-L-methionine</name>
        <dbReference type="ChEBI" id="CHEBI:59789"/>
    </ligand>
</feature>
<feature type="binding site" evidence="1">
    <location>
        <position position="112"/>
    </location>
    <ligand>
        <name>S-adenosyl-L-methionine</name>
        <dbReference type="ChEBI" id="CHEBI:59789"/>
    </ligand>
</feature>
<protein>
    <recommendedName>
        <fullName evidence="1">Ribosomal RNA small subunit methyltransferase H</fullName>
        <ecNumber evidence="1">2.1.1.199</ecNumber>
    </recommendedName>
    <alternativeName>
        <fullName evidence="1">16S rRNA m(4)C1402 methyltransferase</fullName>
    </alternativeName>
    <alternativeName>
        <fullName evidence="1">rRNA (cytosine-N(4)-)-methyltransferase RsmH</fullName>
    </alternativeName>
</protein>
<reference key="1">
    <citation type="journal article" date="2007" name="Proc. Natl. Acad. Sci. U.S.A.">
        <title>The genome of Syntrophus aciditrophicus: life at the thermodynamic limit of microbial growth.</title>
        <authorList>
            <person name="McInerney M.J."/>
            <person name="Rohlin L."/>
            <person name="Mouttaki H."/>
            <person name="Kim U."/>
            <person name="Krupp R.S."/>
            <person name="Rios-Hernandez L."/>
            <person name="Sieber J."/>
            <person name="Struchtemeyer C.G."/>
            <person name="Bhattacharyya A."/>
            <person name="Campbell J.W."/>
            <person name="Gunsalus R.P."/>
        </authorList>
    </citation>
    <scope>NUCLEOTIDE SEQUENCE [LARGE SCALE GENOMIC DNA]</scope>
    <source>
        <strain>SB</strain>
    </source>
</reference>
<dbReference type="EC" id="2.1.1.199" evidence="1"/>
<dbReference type="EMBL" id="CP000252">
    <property type="protein sequence ID" value="ABC76551.1"/>
    <property type="molecule type" value="Genomic_DNA"/>
</dbReference>
<dbReference type="RefSeq" id="WP_011416585.1">
    <property type="nucleotide sequence ID" value="NC_007759.1"/>
</dbReference>
<dbReference type="SMR" id="Q2LR39"/>
<dbReference type="FunCoup" id="Q2LR39">
    <property type="interactions" value="511"/>
</dbReference>
<dbReference type="STRING" id="56780.SYN_01737"/>
<dbReference type="KEGG" id="sat:SYN_01737"/>
<dbReference type="eggNOG" id="COG0275">
    <property type="taxonomic scope" value="Bacteria"/>
</dbReference>
<dbReference type="HOGENOM" id="CLU_038422_2_0_7"/>
<dbReference type="InParanoid" id="Q2LR39"/>
<dbReference type="OrthoDB" id="9806637at2"/>
<dbReference type="Proteomes" id="UP000001933">
    <property type="component" value="Chromosome"/>
</dbReference>
<dbReference type="GO" id="GO:0005737">
    <property type="term" value="C:cytoplasm"/>
    <property type="evidence" value="ECO:0007669"/>
    <property type="project" value="UniProtKB-SubCell"/>
</dbReference>
<dbReference type="GO" id="GO:0071424">
    <property type="term" value="F:rRNA (cytosine-N4-)-methyltransferase activity"/>
    <property type="evidence" value="ECO:0007669"/>
    <property type="project" value="UniProtKB-UniRule"/>
</dbReference>
<dbReference type="GO" id="GO:0070475">
    <property type="term" value="P:rRNA base methylation"/>
    <property type="evidence" value="ECO:0007669"/>
    <property type="project" value="UniProtKB-UniRule"/>
</dbReference>
<dbReference type="FunFam" id="1.10.150.170:FF:000003">
    <property type="entry name" value="Ribosomal RNA small subunit methyltransferase H"/>
    <property type="match status" value="1"/>
</dbReference>
<dbReference type="Gene3D" id="1.10.150.170">
    <property type="entry name" value="Putative methyltransferase TM0872, insert domain"/>
    <property type="match status" value="1"/>
</dbReference>
<dbReference type="Gene3D" id="3.40.50.150">
    <property type="entry name" value="Vaccinia Virus protein VP39"/>
    <property type="match status" value="1"/>
</dbReference>
<dbReference type="HAMAP" id="MF_01007">
    <property type="entry name" value="16SrRNA_methyltr_H"/>
    <property type="match status" value="1"/>
</dbReference>
<dbReference type="InterPro" id="IPR002903">
    <property type="entry name" value="RsmH"/>
</dbReference>
<dbReference type="InterPro" id="IPR023397">
    <property type="entry name" value="SAM-dep_MeTrfase_MraW_recog"/>
</dbReference>
<dbReference type="InterPro" id="IPR029063">
    <property type="entry name" value="SAM-dependent_MTases_sf"/>
</dbReference>
<dbReference type="NCBIfam" id="TIGR00006">
    <property type="entry name" value="16S rRNA (cytosine(1402)-N(4))-methyltransferase RsmH"/>
    <property type="match status" value="1"/>
</dbReference>
<dbReference type="PANTHER" id="PTHR11265:SF0">
    <property type="entry name" value="12S RRNA N4-METHYLCYTIDINE METHYLTRANSFERASE"/>
    <property type="match status" value="1"/>
</dbReference>
<dbReference type="PANTHER" id="PTHR11265">
    <property type="entry name" value="S-ADENOSYL-METHYLTRANSFERASE MRAW"/>
    <property type="match status" value="1"/>
</dbReference>
<dbReference type="Pfam" id="PF01795">
    <property type="entry name" value="Methyltransf_5"/>
    <property type="match status" value="1"/>
</dbReference>
<dbReference type="PIRSF" id="PIRSF004486">
    <property type="entry name" value="MraW"/>
    <property type="match status" value="1"/>
</dbReference>
<dbReference type="SUPFAM" id="SSF81799">
    <property type="entry name" value="Putative methyltransferase TM0872, insert domain"/>
    <property type="match status" value="1"/>
</dbReference>
<dbReference type="SUPFAM" id="SSF53335">
    <property type="entry name" value="S-adenosyl-L-methionine-dependent methyltransferases"/>
    <property type="match status" value="1"/>
</dbReference>
<proteinExistence type="inferred from homology"/>
<evidence type="ECO:0000255" key="1">
    <source>
        <dbReference type="HAMAP-Rule" id="MF_01007"/>
    </source>
</evidence>
<accession>Q2LR39</accession>
<keyword id="KW-0963">Cytoplasm</keyword>
<keyword id="KW-0489">Methyltransferase</keyword>
<keyword id="KW-1185">Reference proteome</keyword>
<keyword id="KW-0698">rRNA processing</keyword>
<keyword id="KW-0949">S-adenosyl-L-methionine</keyword>
<keyword id="KW-0808">Transferase</keyword>
<organism>
    <name type="scientific">Syntrophus aciditrophicus (strain SB)</name>
    <dbReference type="NCBI Taxonomy" id="56780"/>
    <lineage>
        <taxon>Bacteria</taxon>
        <taxon>Pseudomonadati</taxon>
        <taxon>Thermodesulfobacteriota</taxon>
        <taxon>Syntrophia</taxon>
        <taxon>Syntrophales</taxon>
        <taxon>Syntrophaceae</taxon>
        <taxon>Syntrophus</taxon>
    </lineage>
</organism>